<organism>
    <name type="scientific">Acinetobacter baumannii (strain AB0057)</name>
    <dbReference type="NCBI Taxonomy" id="480119"/>
    <lineage>
        <taxon>Bacteria</taxon>
        <taxon>Pseudomonadati</taxon>
        <taxon>Pseudomonadota</taxon>
        <taxon>Gammaproteobacteria</taxon>
        <taxon>Moraxellales</taxon>
        <taxon>Moraxellaceae</taxon>
        <taxon>Acinetobacter</taxon>
        <taxon>Acinetobacter calcoaceticus/baumannii complex</taxon>
    </lineage>
</organism>
<sequence>MKPVIALIGRPNVGKSTLFNQITKSRDALVADFAGLTRDRKYGDATYQNKSFIVVDTGGIGESECGIDNYMAEQSKTAINEADIIIFVVDARAGLLASDEQIARELRTLGKKIYLVANKVDGVHAEAALVEFYKLGMGEPLQVAASHGRGVQQMLEDVLQDIPEDENPEEHDKDTGLRLAIIGRPNVGKSTLVNRLLGEDRVVAFDQPGTTRDSIYIPFEREGRKYTLIDTAGVRRKGKVDEMIEKFSIVKTLQAMKDAHVVVVVVDAREGIVEQDLHLIGYALEAGRAMVIAINKWDNMSEYDRKQCKLDVERRFDFIPWARIHLISALHGTGVGELYPSIHRAYESANLKVSPAKLTQILNDATDQHQPPTVQGRRIKMRYAHMGGQNPPTIVIHGNKVDKTPADYRRYLENVFRKVYKLEGTPVKIEFKTSENPFEGRKSQVDERTAARRRRYIQKFKKAEKKFKR</sequence>
<gene>
    <name evidence="1" type="primary">der</name>
    <name type="synonym">engA</name>
    <name type="ordered locus">AB57_0608</name>
</gene>
<protein>
    <recommendedName>
        <fullName evidence="1">GTPase Der</fullName>
    </recommendedName>
    <alternativeName>
        <fullName evidence="1">GTP-binding protein EngA</fullName>
    </alternativeName>
</protein>
<evidence type="ECO:0000255" key="1">
    <source>
        <dbReference type="HAMAP-Rule" id="MF_00195"/>
    </source>
</evidence>
<feature type="chain" id="PRO_1000124331" description="GTPase Der">
    <location>
        <begin position="1"/>
        <end position="469"/>
    </location>
</feature>
<feature type="domain" description="EngA-type G 1">
    <location>
        <begin position="3"/>
        <end position="166"/>
    </location>
</feature>
<feature type="domain" description="EngA-type G 2">
    <location>
        <begin position="177"/>
        <end position="350"/>
    </location>
</feature>
<feature type="domain" description="KH-like" evidence="1">
    <location>
        <begin position="351"/>
        <end position="435"/>
    </location>
</feature>
<feature type="binding site" evidence="1">
    <location>
        <begin position="9"/>
        <end position="16"/>
    </location>
    <ligand>
        <name>GTP</name>
        <dbReference type="ChEBI" id="CHEBI:37565"/>
        <label>1</label>
    </ligand>
</feature>
<feature type="binding site" evidence="1">
    <location>
        <begin position="56"/>
        <end position="60"/>
    </location>
    <ligand>
        <name>GTP</name>
        <dbReference type="ChEBI" id="CHEBI:37565"/>
        <label>1</label>
    </ligand>
</feature>
<feature type="binding site" evidence="1">
    <location>
        <begin position="118"/>
        <end position="121"/>
    </location>
    <ligand>
        <name>GTP</name>
        <dbReference type="ChEBI" id="CHEBI:37565"/>
        <label>1</label>
    </ligand>
</feature>
<feature type="binding site" evidence="1">
    <location>
        <begin position="183"/>
        <end position="190"/>
    </location>
    <ligand>
        <name>GTP</name>
        <dbReference type="ChEBI" id="CHEBI:37565"/>
        <label>2</label>
    </ligand>
</feature>
<feature type="binding site" evidence="1">
    <location>
        <begin position="230"/>
        <end position="234"/>
    </location>
    <ligand>
        <name>GTP</name>
        <dbReference type="ChEBI" id="CHEBI:37565"/>
        <label>2</label>
    </ligand>
</feature>
<feature type="binding site" evidence="1">
    <location>
        <begin position="295"/>
        <end position="298"/>
    </location>
    <ligand>
        <name>GTP</name>
        <dbReference type="ChEBI" id="CHEBI:37565"/>
        <label>2</label>
    </ligand>
</feature>
<accession>B7I5H1</accession>
<name>DER_ACIB5</name>
<comment type="function">
    <text evidence="1">GTPase that plays an essential role in the late steps of ribosome biogenesis.</text>
</comment>
<comment type="subunit">
    <text evidence="1">Associates with the 50S ribosomal subunit.</text>
</comment>
<comment type="similarity">
    <text evidence="1">Belongs to the TRAFAC class TrmE-Era-EngA-EngB-Septin-like GTPase superfamily. EngA (Der) GTPase family.</text>
</comment>
<reference key="1">
    <citation type="journal article" date="2008" name="J. Bacteriol.">
        <title>Comparative genome sequence analysis of multidrug-resistant Acinetobacter baumannii.</title>
        <authorList>
            <person name="Adams M.D."/>
            <person name="Goglin K."/>
            <person name="Molyneaux N."/>
            <person name="Hujer K.M."/>
            <person name="Lavender H."/>
            <person name="Jamison J.J."/>
            <person name="MacDonald I.J."/>
            <person name="Martin K.M."/>
            <person name="Russo T."/>
            <person name="Campagnari A.A."/>
            <person name="Hujer A.M."/>
            <person name="Bonomo R.A."/>
            <person name="Gill S.R."/>
        </authorList>
    </citation>
    <scope>NUCLEOTIDE SEQUENCE [LARGE SCALE GENOMIC DNA]</scope>
    <source>
        <strain>AB0057</strain>
    </source>
</reference>
<keyword id="KW-0342">GTP-binding</keyword>
<keyword id="KW-0547">Nucleotide-binding</keyword>
<keyword id="KW-0677">Repeat</keyword>
<keyword id="KW-0690">Ribosome biogenesis</keyword>
<proteinExistence type="inferred from homology"/>
<dbReference type="EMBL" id="CP001182">
    <property type="protein sequence ID" value="ACJ40029.1"/>
    <property type="molecule type" value="Genomic_DNA"/>
</dbReference>
<dbReference type="RefSeq" id="WP_000805589.1">
    <property type="nucleotide sequence ID" value="NC_011586.2"/>
</dbReference>
<dbReference type="SMR" id="B7I5H1"/>
<dbReference type="KEGG" id="abn:AB57_0608"/>
<dbReference type="HOGENOM" id="CLU_016077_6_2_6"/>
<dbReference type="Proteomes" id="UP000007094">
    <property type="component" value="Chromosome"/>
</dbReference>
<dbReference type="GO" id="GO:0005525">
    <property type="term" value="F:GTP binding"/>
    <property type="evidence" value="ECO:0007669"/>
    <property type="project" value="UniProtKB-UniRule"/>
</dbReference>
<dbReference type="GO" id="GO:0043022">
    <property type="term" value="F:ribosome binding"/>
    <property type="evidence" value="ECO:0007669"/>
    <property type="project" value="TreeGrafter"/>
</dbReference>
<dbReference type="GO" id="GO:0042254">
    <property type="term" value="P:ribosome biogenesis"/>
    <property type="evidence" value="ECO:0007669"/>
    <property type="project" value="UniProtKB-KW"/>
</dbReference>
<dbReference type="CDD" id="cd01894">
    <property type="entry name" value="EngA1"/>
    <property type="match status" value="1"/>
</dbReference>
<dbReference type="CDD" id="cd01895">
    <property type="entry name" value="EngA2"/>
    <property type="match status" value="1"/>
</dbReference>
<dbReference type="FunFam" id="3.30.300.20:FF:000004">
    <property type="entry name" value="GTPase Der"/>
    <property type="match status" value="1"/>
</dbReference>
<dbReference type="FunFam" id="3.40.50.300:FF:000040">
    <property type="entry name" value="GTPase Der"/>
    <property type="match status" value="1"/>
</dbReference>
<dbReference type="FunFam" id="3.40.50.300:FF:000057">
    <property type="entry name" value="GTPase Der"/>
    <property type="match status" value="1"/>
</dbReference>
<dbReference type="Gene3D" id="3.30.300.20">
    <property type="match status" value="1"/>
</dbReference>
<dbReference type="Gene3D" id="3.40.50.300">
    <property type="entry name" value="P-loop containing nucleotide triphosphate hydrolases"/>
    <property type="match status" value="2"/>
</dbReference>
<dbReference type="HAMAP" id="MF_00195">
    <property type="entry name" value="GTPase_Der"/>
    <property type="match status" value="1"/>
</dbReference>
<dbReference type="InterPro" id="IPR031166">
    <property type="entry name" value="G_ENGA"/>
</dbReference>
<dbReference type="InterPro" id="IPR006073">
    <property type="entry name" value="GTP-bd"/>
</dbReference>
<dbReference type="InterPro" id="IPR016484">
    <property type="entry name" value="GTPase_Der"/>
</dbReference>
<dbReference type="InterPro" id="IPR032859">
    <property type="entry name" value="KH_dom-like"/>
</dbReference>
<dbReference type="InterPro" id="IPR015946">
    <property type="entry name" value="KH_dom-like_a/b"/>
</dbReference>
<dbReference type="InterPro" id="IPR027417">
    <property type="entry name" value="P-loop_NTPase"/>
</dbReference>
<dbReference type="InterPro" id="IPR005225">
    <property type="entry name" value="Small_GTP-bd"/>
</dbReference>
<dbReference type="NCBIfam" id="TIGR03594">
    <property type="entry name" value="GTPase_EngA"/>
    <property type="match status" value="1"/>
</dbReference>
<dbReference type="NCBIfam" id="TIGR00231">
    <property type="entry name" value="small_GTP"/>
    <property type="match status" value="2"/>
</dbReference>
<dbReference type="PANTHER" id="PTHR43834">
    <property type="entry name" value="GTPASE DER"/>
    <property type="match status" value="1"/>
</dbReference>
<dbReference type="PANTHER" id="PTHR43834:SF6">
    <property type="entry name" value="GTPASE DER"/>
    <property type="match status" value="1"/>
</dbReference>
<dbReference type="Pfam" id="PF14714">
    <property type="entry name" value="KH_dom-like"/>
    <property type="match status" value="1"/>
</dbReference>
<dbReference type="Pfam" id="PF01926">
    <property type="entry name" value="MMR_HSR1"/>
    <property type="match status" value="2"/>
</dbReference>
<dbReference type="PIRSF" id="PIRSF006485">
    <property type="entry name" value="GTP-binding_EngA"/>
    <property type="match status" value="1"/>
</dbReference>
<dbReference type="PRINTS" id="PR00326">
    <property type="entry name" value="GTP1OBG"/>
</dbReference>
<dbReference type="SUPFAM" id="SSF52540">
    <property type="entry name" value="P-loop containing nucleoside triphosphate hydrolases"/>
    <property type="match status" value="2"/>
</dbReference>
<dbReference type="PROSITE" id="PS51712">
    <property type="entry name" value="G_ENGA"/>
    <property type="match status" value="2"/>
</dbReference>